<dbReference type="EMBL" id="CP000614">
    <property type="protein sequence ID" value="ABO53347.1"/>
    <property type="molecule type" value="Genomic_DNA"/>
</dbReference>
<dbReference type="SMR" id="A4JAP4"/>
<dbReference type="KEGG" id="bvi:Bcep1808_0334"/>
<dbReference type="eggNOG" id="COG0185">
    <property type="taxonomic scope" value="Bacteria"/>
</dbReference>
<dbReference type="HOGENOM" id="CLU_144911_0_1_4"/>
<dbReference type="Proteomes" id="UP000002287">
    <property type="component" value="Chromosome 1"/>
</dbReference>
<dbReference type="GO" id="GO:0005737">
    <property type="term" value="C:cytoplasm"/>
    <property type="evidence" value="ECO:0007669"/>
    <property type="project" value="UniProtKB-ARBA"/>
</dbReference>
<dbReference type="GO" id="GO:0015935">
    <property type="term" value="C:small ribosomal subunit"/>
    <property type="evidence" value="ECO:0007669"/>
    <property type="project" value="InterPro"/>
</dbReference>
<dbReference type="GO" id="GO:0019843">
    <property type="term" value="F:rRNA binding"/>
    <property type="evidence" value="ECO:0007669"/>
    <property type="project" value="UniProtKB-UniRule"/>
</dbReference>
<dbReference type="GO" id="GO:0003735">
    <property type="term" value="F:structural constituent of ribosome"/>
    <property type="evidence" value="ECO:0007669"/>
    <property type="project" value="InterPro"/>
</dbReference>
<dbReference type="GO" id="GO:0000028">
    <property type="term" value="P:ribosomal small subunit assembly"/>
    <property type="evidence" value="ECO:0007669"/>
    <property type="project" value="TreeGrafter"/>
</dbReference>
<dbReference type="GO" id="GO:0006412">
    <property type="term" value="P:translation"/>
    <property type="evidence" value="ECO:0007669"/>
    <property type="project" value="UniProtKB-UniRule"/>
</dbReference>
<dbReference type="FunFam" id="3.30.860.10:FF:000001">
    <property type="entry name" value="30S ribosomal protein S19"/>
    <property type="match status" value="1"/>
</dbReference>
<dbReference type="Gene3D" id="3.30.860.10">
    <property type="entry name" value="30s Ribosomal Protein S19, Chain A"/>
    <property type="match status" value="1"/>
</dbReference>
<dbReference type="HAMAP" id="MF_00531">
    <property type="entry name" value="Ribosomal_uS19"/>
    <property type="match status" value="1"/>
</dbReference>
<dbReference type="InterPro" id="IPR002222">
    <property type="entry name" value="Ribosomal_uS19"/>
</dbReference>
<dbReference type="InterPro" id="IPR005732">
    <property type="entry name" value="Ribosomal_uS19_bac-type"/>
</dbReference>
<dbReference type="InterPro" id="IPR020934">
    <property type="entry name" value="Ribosomal_uS19_CS"/>
</dbReference>
<dbReference type="InterPro" id="IPR023575">
    <property type="entry name" value="Ribosomal_uS19_SF"/>
</dbReference>
<dbReference type="NCBIfam" id="TIGR01050">
    <property type="entry name" value="rpsS_bact"/>
    <property type="match status" value="1"/>
</dbReference>
<dbReference type="PANTHER" id="PTHR11880">
    <property type="entry name" value="RIBOSOMAL PROTEIN S19P FAMILY MEMBER"/>
    <property type="match status" value="1"/>
</dbReference>
<dbReference type="PANTHER" id="PTHR11880:SF8">
    <property type="entry name" value="SMALL RIBOSOMAL SUBUNIT PROTEIN US19M"/>
    <property type="match status" value="1"/>
</dbReference>
<dbReference type="Pfam" id="PF00203">
    <property type="entry name" value="Ribosomal_S19"/>
    <property type="match status" value="1"/>
</dbReference>
<dbReference type="PIRSF" id="PIRSF002144">
    <property type="entry name" value="Ribosomal_S19"/>
    <property type="match status" value="1"/>
</dbReference>
<dbReference type="PRINTS" id="PR00975">
    <property type="entry name" value="RIBOSOMALS19"/>
</dbReference>
<dbReference type="SUPFAM" id="SSF54570">
    <property type="entry name" value="Ribosomal protein S19"/>
    <property type="match status" value="1"/>
</dbReference>
<dbReference type="PROSITE" id="PS00323">
    <property type="entry name" value="RIBOSOMAL_S19"/>
    <property type="match status" value="1"/>
</dbReference>
<organism>
    <name type="scientific">Burkholderia vietnamiensis (strain G4 / LMG 22486)</name>
    <name type="common">Burkholderia cepacia (strain R1808)</name>
    <dbReference type="NCBI Taxonomy" id="269482"/>
    <lineage>
        <taxon>Bacteria</taxon>
        <taxon>Pseudomonadati</taxon>
        <taxon>Pseudomonadota</taxon>
        <taxon>Betaproteobacteria</taxon>
        <taxon>Burkholderiales</taxon>
        <taxon>Burkholderiaceae</taxon>
        <taxon>Burkholderia</taxon>
        <taxon>Burkholderia cepacia complex</taxon>
    </lineage>
</organism>
<evidence type="ECO:0000255" key="1">
    <source>
        <dbReference type="HAMAP-Rule" id="MF_00531"/>
    </source>
</evidence>
<evidence type="ECO:0000305" key="2"/>
<name>RS19_BURVG</name>
<feature type="chain" id="PRO_1000051027" description="Small ribosomal subunit protein uS19">
    <location>
        <begin position="1"/>
        <end position="91"/>
    </location>
</feature>
<comment type="function">
    <text evidence="1">Protein S19 forms a complex with S13 that binds strongly to the 16S ribosomal RNA.</text>
</comment>
<comment type="similarity">
    <text evidence="1">Belongs to the universal ribosomal protein uS19 family.</text>
</comment>
<sequence length="91" mass="10108">MARSVKKGPFCDAHLLKKVEAAAASRDKKPIKTWSRRSTILPDFIGLTIAVHNGRQHVPVYISENMVGHKLGEFALTRTFKGHAADKKAKK</sequence>
<keyword id="KW-0687">Ribonucleoprotein</keyword>
<keyword id="KW-0689">Ribosomal protein</keyword>
<keyword id="KW-0694">RNA-binding</keyword>
<keyword id="KW-0699">rRNA-binding</keyword>
<reference key="1">
    <citation type="submission" date="2007-03" db="EMBL/GenBank/DDBJ databases">
        <title>Complete sequence of chromosome 1 of Burkholderia vietnamiensis G4.</title>
        <authorList>
            <consortium name="US DOE Joint Genome Institute"/>
            <person name="Copeland A."/>
            <person name="Lucas S."/>
            <person name="Lapidus A."/>
            <person name="Barry K."/>
            <person name="Detter J.C."/>
            <person name="Glavina del Rio T."/>
            <person name="Hammon N."/>
            <person name="Israni S."/>
            <person name="Dalin E."/>
            <person name="Tice H."/>
            <person name="Pitluck S."/>
            <person name="Chain P."/>
            <person name="Malfatti S."/>
            <person name="Shin M."/>
            <person name="Vergez L."/>
            <person name="Schmutz J."/>
            <person name="Larimer F."/>
            <person name="Land M."/>
            <person name="Hauser L."/>
            <person name="Kyrpides N."/>
            <person name="Tiedje J."/>
            <person name="Richardson P."/>
        </authorList>
    </citation>
    <scope>NUCLEOTIDE SEQUENCE [LARGE SCALE GENOMIC DNA]</scope>
    <source>
        <strain>G4 / LMG 22486</strain>
    </source>
</reference>
<proteinExistence type="inferred from homology"/>
<gene>
    <name evidence="1" type="primary">rpsS</name>
    <name type="ordered locus">Bcep1808_0334</name>
</gene>
<protein>
    <recommendedName>
        <fullName evidence="1">Small ribosomal subunit protein uS19</fullName>
    </recommendedName>
    <alternativeName>
        <fullName evidence="2">30S ribosomal protein S19</fullName>
    </alternativeName>
</protein>
<accession>A4JAP4</accession>